<reference key="1">
    <citation type="journal article" date="2008" name="FEMS Yeast Res.">
        <title>Comparative genome analysis of a Saccharomyces cerevisiae wine strain.</title>
        <authorList>
            <person name="Borneman A.R."/>
            <person name="Forgan A.H."/>
            <person name="Pretorius I.S."/>
            <person name="Chambers P.J."/>
        </authorList>
    </citation>
    <scope>NUCLEOTIDE SEQUENCE [LARGE SCALE GENOMIC DNA]</scope>
    <source>
        <strain>AWRI1631</strain>
    </source>
</reference>
<feature type="chain" id="PRO_0000408923" description="SWI5-dependent HO expression protein 2">
    <location>
        <begin position="1"/>
        <end position="246"/>
    </location>
</feature>
<feature type="short sequence motif" description="Nuclear localization signal" evidence="1">
    <location>
        <begin position="15"/>
        <end position="23"/>
    </location>
</feature>
<keyword id="KW-0963">Cytoplasm</keyword>
<keyword id="KW-0509">mRNA transport</keyword>
<keyword id="KW-0539">Nucleus</keyword>
<keyword id="KW-0694">RNA-binding</keyword>
<keyword id="KW-0813">Transport</keyword>
<proteinExistence type="inferred from homology"/>
<sequence>MSKDKDIKVTPGTCELVEQILALLSRYLSSYIHVLNKFISHLRRVATLRFERTTLIKFVKKLRFYNDCVLSYNASEFINEGKNELDPEADSFDKVILPIASMFVKCVETFDLLNYYLTQSLQKEILSKTLNEDLTLTAESILAIDDTYNHFVKFSQWMIESLRIGSNLLDLEVVQFAIKCADEDGTNIGETDNIFLQEILPVNSEEEFQTLSAAWHSILDGKLSALDEEFDVVATKWHDKFGKLKN</sequence>
<organism>
    <name type="scientific">Saccharomyces cerevisiae (strain AWRI1631)</name>
    <name type="common">Baker's yeast</name>
    <dbReference type="NCBI Taxonomy" id="545124"/>
    <lineage>
        <taxon>Eukaryota</taxon>
        <taxon>Fungi</taxon>
        <taxon>Dikarya</taxon>
        <taxon>Ascomycota</taxon>
        <taxon>Saccharomycotina</taxon>
        <taxon>Saccharomycetes</taxon>
        <taxon>Saccharomycetales</taxon>
        <taxon>Saccharomycetaceae</taxon>
        <taxon>Saccharomyces</taxon>
    </lineage>
</organism>
<protein>
    <recommendedName>
        <fullName>SWI5-dependent HO expression protein 2</fullName>
    </recommendedName>
</protein>
<accession>B5VM30</accession>
<dbReference type="EMBL" id="ABSV01001452">
    <property type="protein sequence ID" value="EDZ71015.1"/>
    <property type="molecule type" value="Genomic_DNA"/>
</dbReference>
<dbReference type="SMR" id="B5VM30"/>
<dbReference type="Proteomes" id="UP000008988">
    <property type="component" value="Unassembled WGS sequence"/>
</dbReference>
<dbReference type="GO" id="GO:0005737">
    <property type="term" value="C:cytoplasm"/>
    <property type="evidence" value="ECO:0007669"/>
    <property type="project" value="UniProtKB-SubCell"/>
</dbReference>
<dbReference type="GO" id="GO:0005634">
    <property type="term" value="C:nucleus"/>
    <property type="evidence" value="ECO:0007669"/>
    <property type="project" value="UniProtKB-SubCell"/>
</dbReference>
<dbReference type="GO" id="GO:0003723">
    <property type="term" value="F:RNA binding"/>
    <property type="evidence" value="ECO:0007669"/>
    <property type="project" value="UniProtKB-KW"/>
</dbReference>
<dbReference type="GO" id="GO:0051028">
    <property type="term" value="P:mRNA transport"/>
    <property type="evidence" value="ECO:0007669"/>
    <property type="project" value="UniProtKB-KW"/>
</dbReference>
<dbReference type="FunFam" id="1.20.200.20:FF:000001">
    <property type="entry name" value="SWI5-dependent HO expression protein 2"/>
    <property type="match status" value="1"/>
</dbReference>
<dbReference type="Gene3D" id="1.20.200.20">
    <property type="entry name" value="She2 domain"/>
    <property type="match status" value="1"/>
</dbReference>
<dbReference type="InterPro" id="IPR024261">
    <property type="entry name" value="RNA-bd_She2"/>
</dbReference>
<dbReference type="InterPro" id="IPR036827">
    <property type="entry name" value="She2_dom_sf"/>
</dbReference>
<dbReference type="Pfam" id="PF11435">
    <property type="entry name" value="She2p"/>
    <property type="match status" value="1"/>
</dbReference>
<dbReference type="SUPFAM" id="SSF116942">
    <property type="entry name" value="RNA-binding protein She2p"/>
    <property type="match status" value="1"/>
</dbReference>
<name>SHE2_YEAS6</name>
<evidence type="ECO:0000250" key="1"/>
<evidence type="ECO:0000250" key="2">
    <source>
        <dbReference type="UniProtKB" id="P36068"/>
    </source>
</evidence>
<evidence type="ECO:0000305" key="3"/>
<gene>
    <name type="primary">SHE2</name>
    <name type="ORF">AWRI1631_110940</name>
</gene>
<comment type="function">
    <text evidence="1">RNA-binding protein that binds specific mRNAs including the ASH1 mRNA, coding for a repressor of the HO endonuclease. Part of the mRNA localization machinery that restricts accumulation of certain proteins to the bud and in the daughter cell. Recruits the MYO4-SHE3 complex to the ASH1 mRNA. Also recruits LOC1 and PUF6 to ASH1 mRNA, which are required for translational repression of this mRNA (By similarity).</text>
</comment>
<comment type="subunit">
    <text evidence="1">Homodimer and homotetramer. Interacts with LOC1, MYO4, PUF6, SHE3 and with RNA pol II subunits RPO21, SPT4 and SPT5.</text>
</comment>
<comment type="subcellular location">
    <subcellularLocation>
        <location evidence="2">Cytoplasm</location>
    </subcellularLocation>
    <subcellularLocation>
        <location evidence="2">Nucleus</location>
    </subcellularLocation>
    <text evidence="2">Shuttles between the nucleus and cytoplasm and is exported in an mRNA-dependent manner. The presence in the nucleus is essential for PUF6 and LOC1 to bind the ASH1 mRNA.</text>
</comment>
<comment type="similarity">
    <text evidence="3">Belongs to the SHE2 family.</text>
</comment>